<protein>
    <recommendedName>
        <fullName evidence="1">Acyl carrier protein</fullName>
        <shortName evidence="1">ACP</shortName>
    </recommendedName>
</protein>
<reference key="1">
    <citation type="journal article" date="2004" name="Nat. Genet.">
        <title>Comparison of genome degradation in Paratyphi A and Typhi, human-restricted serovars of Salmonella enterica that cause typhoid.</title>
        <authorList>
            <person name="McClelland M."/>
            <person name="Sanderson K.E."/>
            <person name="Clifton S.W."/>
            <person name="Latreille P."/>
            <person name="Porwollik S."/>
            <person name="Sabo A."/>
            <person name="Meyer R."/>
            <person name="Bieri T."/>
            <person name="Ozersky P."/>
            <person name="McLellan M."/>
            <person name="Harkins C.R."/>
            <person name="Wang C."/>
            <person name="Nguyen C."/>
            <person name="Berghoff A."/>
            <person name="Elliott G."/>
            <person name="Kohlberg S."/>
            <person name="Strong C."/>
            <person name="Du F."/>
            <person name="Carter J."/>
            <person name="Kremizki C."/>
            <person name="Layman D."/>
            <person name="Leonard S."/>
            <person name="Sun H."/>
            <person name="Fulton L."/>
            <person name="Nash W."/>
            <person name="Miner T."/>
            <person name="Minx P."/>
            <person name="Delehaunty K."/>
            <person name="Fronick C."/>
            <person name="Magrini V."/>
            <person name="Nhan M."/>
            <person name="Warren W."/>
            <person name="Florea L."/>
            <person name="Spieth J."/>
            <person name="Wilson R.K."/>
        </authorList>
    </citation>
    <scope>NUCLEOTIDE SEQUENCE [LARGE SCALE GENOMIC DNA]</scope>
    <source>
        <strain>ATCC 9150 / SARB42</strain>
    </source>
</reference>
<feature type="chain" id="PRO_1000066687" description="Acyl carrier protein">
    <location>
        <begin position="1"/>
        <end position="78"/>
    </location>
</feature>
<feature type="domain" description="Carrier" evidence="2">
    <location>
        <begin position="2"/>
        <end position="77"/>
    </location>
</feature>
<feature type="modified residue" description="O-(pantetheine 4'-phosphoryl)serine" evidence="2">
    <location>
        <position position="37"/>
    </location>
</feature>
<name>ACP_SALPA</name>
<sequence>MSTIEERVKKIIGEQLGVKQEEVTNNASFVEDLGADSLDTVELVMALEEEFDTEIPDEEAEKITTVQAAIDYINGHQA</sequence>
<evidence type="ECO:0000255" key="1">
    <source>
        <dbReference type="HAMAP-Rule" id="MF_01217"/>
    </source>
</evidence>
<evidence type="ECO:0000255" key="2">
    <source>
        <dbReference type="PROSITE-ProRule" id="PRU00258"/>
    </source>
</evidence>
<proteinExistence type="inferred from homology"/>
<dbReference type="EMBL" id="CP000026">
    <property type="protein sequence ID" value="AAV77581.1"/>
    <property type="molecule type" value="Genomic_DNA"/>
</dbReference>
<dbReference type="RefSeq" id="WP_000103754.1">
    <property type="nucleotide sequence ID" value="NC_006511.1"/>
</dbReference>
<dbReference type="SMR" id="Q5PGU4"/>
<dbReference type="GeneID" id="98387866"/>
<dbReference type="KEGG" id="spt:SPA1655"/>
<dbReference type="HOGENOM" id="CLU_108696_5_1_6"/>
<dbReference type="UniPathway" id="UPA00094"/>
<dbReference type="Proteomes" id="UP000008185">
    <property type="component" value="Chromosome"/>
</dbReference>
<dbReference type="GO" id="GO:0005829">
    <property type="term" value="C:cytosol"/>
    <property type="evidence" value="ECO:0007669"/>
    <property type="project" value="TreeGrafter"/>
</dbReference>
<dbReference type="GO" id="GO:0016020">
    <property type="term" value="C:membrane"/>
    <property type="evidence" value="ECO:0007669"/>
    <property type="project" value="GOC"/>
</dbReference>
<dbReference type="GO" id="GO:0000035">
    <property type="term" value="F:acyl binding"/>
    <property type="evidence" value="ECO:0007669"/>
    <property type="project" value="TreeGrafter"/>
</dbReference>
<dbReference type="GO" id="GO:0000036">
    <property type="term" value="F:acyl carrier activity"/>
    <property type="evidence" value="ECO:0007669"/>
    <property type="project" value="UniProtKB-UniRule"/>
</dbReference>
<dbReference type="GO" id="GO:0009245">
    <property type="term" value="P:lipid A biosynthetic process"/>
    <property type="evidence" value="ECO:0007669"/>
    <property type="project" value="TreeGrafter"/>
</dbReference>
<dbReference type="FunFam" id="1.10.1200.10:FF:000001">
    <property type="entry name" value="Acyl carrier protein"/>
    <property type="match status" value="1"/>
</dbReference>
<dbReference type="Gene3D" id="1.10.1200.10">
    <property type="entry name" value="ACP-like"/>
    <property type="match status" value="1"/>
</dbReference>
<dbReference type="HAMAP" id="MF_01217">
    <property type="entry name" value="Acyl_carrier"/>
    <property type="match status" value="1"/>
</dbReference>
<dbReference type="InterPro" id="IPR003231">
    <property type="entry name" value="ACP"/>
</dbReference>
<dbReference type="InterPro" id="IPR036736">
    <property type="entry name" value="ACP-like_sf"/>
</dbReference>
<dbReference type="InterPro" id="IPR009081">
    <property type="entry name" value="PP-bd_ACP"/>
</dbReference>
<dbReference type="InterPro" id="IPR006162">
    <property type="entry name" value="Ppantetheine_attach_site"/>
</dbReference>
<dbReference type="NCBIfam" id="TIGR00517">
    <property type="entry name" value="acyl_carrier"/>
    <property type="match status" value="1"/>
</dbReference>
<dbReference type="NCBIfam" id="NF002148">
    <property type="entry name" value="PRK00982.1-2"/>
    <property type="match status" value="1"/>
</dbReference>
<dbReference type="NCBIfam" id="NF002149">
    <property type="entry name" value="PRK00982.1-3"/>
    <property type="match status" value="1"/>
</dbReference>
<dbReference type="NCBIfam" id="NF002150">
    <property type="entry name" value="PRK00982.1-4"/>
    <property type="match status" value="1"/>
</dbReference>
<dbReference type="NCBIfam" id="NF002151">
    <property type="entry name" value="PRK00982.1-5"/>
    <property type="match status" value="1"/>
</dbReference>
<dbReference type="PANTHER" id="PTHR20863">
    <property type="entry name" value="ACYL CARRIER PROTEIN"/>
    <property type="match status" value="1"/>
</dbReference>
<dbReference type="PANTHER" id="PTHR20863:SF76">
    <property type="entry name" value="CARRIER DOMAIN-CONTAINING PROTEIN"/>
    <property type="match status" value="1"/>
</dbReference>
<dbReference type="Pfam" id="PF00550">
    <property type="entry name" value="PP-binding"/>
    <property type="match status" value="1"/>
</dbReference>
<dbReference type="SUPFAM" id="SSF47336">
    <property type="entry name" value="ACP-like"/>
    <property type="match status" value="1"/>
</dbReference>
<dbReference type="PROSITE" id="PS50075">
    <property type="entry name" value="CARRIER"/>
    <property type="match status" value="1"/>
</dbReference>
<dbReference type="PROSITE" id="PS00012">
    <property type="entry name" value="PHOSPHOPANTETHEINE"/>
    <property type="match status" value="1"/>
</dbReference>
<comment type="function">
    <text evidence="1">Carrier of the growing fatty acid chain in fatty acid biosynthesis.</text>
</comment>
<comment type="pathway">
    <text evidence="1">Lipid metabolism; fatty acid biosynthesis.</text>
</comment>
<comment type="subcellular location">
    <subcellularLocation>
        <location evidence="1">Cytoplasm</location>
    </subcellularLocation>
</comment>
<comment type="PTM">
    <text evidence="1">4'-phosphopantetheine is transferred from CoA to a specific serine of apo-ACP by AcpS. This modification is essential for activity because fatty acids are bound in thioester linkage to the sulfhydryl of the prosthetic group.</text>
</comment>
<comment type="similarity">
    <text evidence="1">Belongs to the acyl carrier protein (ACP) family.</text>
</comment>
<organism>
    <name type="scientific">Salmonella paratyphi A (strain ATCC 9150 / SARB42)</name>
    <dbReference type="NCBI Taxonomy" id="295319"/>
    <lineage>
        <taxon>Bacteria</taxon>
        <taxon>Pseudomonadati</taxon>
        <taxon>Pseudomonadota</taxon>
        <taxon>Gammaproteobacteria</taxon>
        <taxon>Enterobacterales</taxon>
        <taxon>Enterobacteriaceae</taxon>
        <taxon>Salmonella</taxon>
    </lineage>
</organism>
<accession>Q5PGU4</accession>
<keyword id="KW-0963">Cytoplasm</keyword>
<keyword id="KW-0275">Fatty acid biosynthesis</keyword>
<keyword id="KW-0276">Fatty acid metabolism</keyword>
<keyword id="KW-0444">Lipid biosynthesis</keyword>
<keyword id="KW-0443">Lipid metabolism</keyword>
<keyword id="KW-0596">Phosphopantetheine</keyword>
<keyword id="KW-0597">Phosphoprotein</keyword>
<gene>
    <name evidence="1" type="primary">acpP</name>
    <name type="ordered locus">SPA1655</name>
</gene>